<organism>
    <name type="scientific">Candida albicans (strain SC5314 / ATCC MYA-2876)</name>
    <name type="common">Yeast</name>
    <dbReference type="NCBI Taxonomy" id="237561"/>
    <lineage>
        <taxon>Eukaryota</taxon>
        <taxon>Fungi</taxon>
        <taxon>Dikarya</taxon>
        <taxon>Ascomycota</taxon>
        <taxon>Saccharomycotina</taxon>
        <taxon>Pichiomycetes</taxon>
        <taxon>Debaryomycetaceae</taxon>
        <taxon>Candida/Lodderomyces clade</taxon>
        <taxon>Candida</taxon>
    </lineage>
</organism>
<sequence>MLFSSLLVSTLVSVATAANQEVEAIQFSNLGFSGTYNQVEKLSNIYKDSCSCEVNKTPVSFSGTNAPLNEEVSVHFRGPLVLNKFASYVSDGFKYGDDSSGDWKRLSYYEGSSGTSENVTFLTSAGKNSSCLGIGLTYAGTDGISKADSSTVLAKNTLINSNDEFVIFSNISCGKSGYNNDCGVYRSDIPAYHGFYGTTKMFLFEFQMPNETHTSTDISNYNMPAIWLLNAHIPRTAQYSMNVNCSCWRSGCGEFDIFEVMNSTEYLHMYSTIHDYQGSDDIQTGMAAPAYIERDLTGTMSGGVAFDSSGNAVVWVSNSTSFDSTIQASSVNSWVKQAGADVATTLATVTGQSATTTSKKSGGVSYQPSFITNLLMTVLTLWVI</sequence>
<accession>Q59L72</accession>
<accession>A0A1D8PG07</accession>
<accession>Q59L52</accession>
<gene>
    <name type="primary">PGA52</name>
    <name type="ordered locus">CAALFM_C200100CA</name>
    <name type="ORF">CaO19.1911</name>
    <name type="ORF">CaO19.9467</name>
</gene>
<comment type="function">
    <text evidence="1">Probable circularly permuted 1,3-beta-glucanase involved in cell wall modification through beta-1,3-glucan network alterations such as increased branching or remodeling.</text>
</comment>
<comment type="catalytic activity">
    <reaction evidence="1">
        <text>Hydrolysis of (1-&gt;3)-beta-D-glucosidic linkages in (1-&gt;3)-beta-D-glucans.</text>
        <dbReference type="EC" id="3.2.1.39"/>
    </reaction>
</comment>
<comment type="subcellular location">
    <subcellularLocation>
        <location evidence="4">Cell membrane</location>
        <topology evidence="4">Lipid-anchor</topology>
        <topology evidence="4">GPI-anchor</topology>
    </subcellularLocation>
</comment>
<comment type="induction">
    <text evidence="3 5">Expression is induced by fluconazole and repressed by CAP2/HAP43.</text>
</comment>
<comment type="domain">
    <text evidence="1">The conserved ExDxxE motif might be important for catalytic activity.</text>
</comment>
<comment type="similarity">
    <text evidence="6">Belongs to the PGA52 family.</text>
</comment>
<feature type="signal peptide" evidence="2">
    <location>
        <begin position="1"/>
        <end position="17"/>
    </location>
</feature>
<feature type="chain" id="PRO_0000429964" description="Probable circularly permuted 1,3-beta-glucanase PGA52">
    <location>
        <begin position="18"/>
        <end position="361"/>
    </location>
</feature>
<feature type="propeptide" id="PRO_0000429965" description="Removed in mature form" evidence="2">
    <location>
        <begin position="362"/>
        <end position="384"/>
    </location>
</feature>
<feature type="short sequence motif" description="ExDxxE motif" evidence="1">
    <location>
        <begin position="254"/>
        <end position="259"/>
    </location>
</feature>
<feature type="lipid moiety-binding region" description="GPI-anchor amidated serine" evidence="2">
    <location>
        <position position="361"/>
    </location>
</feature>
<feature type="glycosylation site" description="N-linked (GlcNAc...) asparagine" evidence="2">
    <location>
        <position position="118"/>
    </location>
</feature>
<feature type="glycosylation site" description="N-linked (GlcNAc...) asparagine" evidence="2">
    <location>
        <position position="128"/>
    </location>
</feature>
<feature type="glycosylation site" description="N-linked (GlcNAc...) asparagine" evidence="2">
    <location>
        <position position="170"/>
    </location>
</feature>
<feature type="glycosylation site" description="N-linked (GlcNAc...) asparagine" evidence="2">
    <location>
        <position position="210"/>
    </location>
</feature>
<feature type="glycosylation site" description="N-linked (GlcNAc...) asparagine" evidence="2">
    <location>
        <position position="244"/>
    </location>
</feature>
<feature type="glycosylation site" description="N-linked (GlcNAc...) asparagine" evidence="2">
    <location>
        <position position="262"/>
    </location>
</feature>
<feature type="glycosylation site" description="N-linked (GlcNAc...) asparagine" evidence="2">
    <location>
        <position position="318"/>
    </location>
</feature>
<dbReference type="EC" id="3.2.1.39" evidence="1"/>
<dbReference type="EMBL" id="CP017624">
    <property type="protein sequence ID" value="AOW27065.1"/>
    <property type="molecule type" value="Genomic_DNA"/>
</dbReference>
<dbReference type="RefSeq" id="XP_710476.2">
    <property type="nucleotide sequence ID" value="XM_705384.2"/>
</dbReference>
<dbReference type="FunCoup" id="Q59L72">
    <property type="interactions" value="2"/>
</dbReference>
<dbReference type="STRING" id="237561.Q59L72"/>
<dbReference type="GlyCosmos" id="Q59L72">
    <property type="glycosylation" value="7 sites, No reported glycans"/>
</dbReference>
<dbReference type="EnsemblFungi" id="C2_00100C_A-T">
    <property type="protein sequence ID" value="C2_00100C_A-T-p1"/>
    <property type="gene ID" value="C2_00100C_A"/>
</dbReference>
<dbReference type="GeneID" id="3647908"/>
<dbReference type="KEGG" id="cal:CAALFM_C200100CA"/>
<dbReference type="CGD" id="CAL0000178744">
    <property type="gene designation" value="PGA52"/>
</dbReference>
<dbReference type="VEuPathDB" id="FungiDB:C2_00100C_A"/>
<dbReference type="eggNOG" id="ENOG502QSTV">
    <property type="taxonomic scope" value="Eukaryota"/>
</dbReference>
<dbReference type="HOGENOM" id="CLU_030276_4_0_1"/>
<dbReference type="InParanoid" id="Q59L72"/>
<dbReference type="OMA" id="STIHDYQ"/>
<dbReference type="OrthoDB" id="118256at2759"/>
<dbReference type="PRO" id="PR:Q59L72"/>
<dbReference type="Proteomes" id="UP000000559">
    <property type="component" value="Chromosome 2"/>
</dbReference>
<dbReference type="GO" id="GO:1903561">
    <property type="term" value="C:extracellular vesicle"/>
    <property type="evidence" value="ECO:0000314"/>
    <property type="project" value="CGD"/>
</dbReference>
<dbReference type="GO" id="GO:0009277">
    <property type="term" value="C:fungal-type cell wall"/>
    <property type="evidence" value="ECO:0000318"/>
    <property type="project" value="GO_Central"/>
</dbReference>
<dbReference type="GO" id="GO:0005886">
    <property type="term" value="C:plasma membrane"/>
    <property type="evidence" value="ECO:0000314"/>
    <property type="project" value="CGD"/>
</dbReference>
<dbReference type="GO" id="GO:0098552">
    <property type="term" value="C:side of membrane"/>
    <property type="evidence" value="ECO:0007669"/>
    <property type="project" value="UniProtKB-KW"/>
</dbReference>
<dbReference type="GO" id="GO:0016798">
    <property type="term" value="F:hydrolase activity, acting on glycosyl bonds"/>
    <property type="evidence" value="ECO:0007669"/>
    <property type="project" value="UniProtKB-KW"/>
</dbReference>
<dbReference type="GO" id="GO:0071555">
    <property type="term" value="P:cell wall organization"/>
    <property type="evidence" value="ECO:0007669"/>
    <property type="project" value="UniProtKB-KW"/>
</dbReference>
<dbReference type="InterPro" id="IPR018805">
    <property type="entry name" value="YJL171C/Tos1_C"/>
</dbReference>
<dbReference type="InterPro" id="IPR018807">
    <property type="entry name" value="YJL171C/Tos1_N"/>
</dbReference>
<dbReference type="PANTHER" id="PTHR31737">
    <property type="entry name" value="PROTEIN TOS1"/>
    <property type="match status" value="1"/>
</dbReference>
<dbReference type="PANTHER" id="PTHR31737:SF2">
    <property type="entry name" value="PROTEIN TOS1"/>
    <property type="match status" value="1"/>
</dbReference>
<dbReference type="Pfam" id="PF10287">
    <property type="entry name" value="YJL171C_Tos1_C"/>
    <property type="match status" value="1"/>
</dbReference>
<dbReference type="Pfam" id="PF10290">
    <property type="entry name" value="YJL171C_Tos1_N"/>
    <property type="match status" value="1"/>
</dbReference>
<evidence type="ECO:0000250" key="1">
    <source>
        <dbReference type="UniProtKB" id="P38288"/>
    </source>
</evidence>
<evidence type="ECO:0000255" key="2"/>
<evidence type="ECO:0000269" key="3">
    <source>
    </source>
</evidence>
<evidence type="ECO:0000269" key="4">
    <source>
    </source>
</evidence>
<evidence type="ECO:0000269" key="5">
    <source>
    </source>
</evidence>
<evidence type="ECO:0000305" key="6"/>
<reference key="1">
    <citation type="journal article" date="2004" name="Proc. Natl. Acad. Sci. U.S.A.">
        <title>The diploid genome sequence of Candida albicans.</title>
        <authorList>
            <person name="Jones T."/>
            <person name="Federspiel N.A."/>
            <person name="Chibana H."/>
            <person name="Dungan J."/>
            <person name="Kalman S."/>
            <person name="Magee B.B."/>
            <person name="Newport G."/>
            <person name="Thorstenson Y.R."/>
            <person name="Agabian N."/>
            <person name="Magee P.T."/>
            <person name="Davis R.W."/>
            <person name="Scherer S."/>
        </authorList>
    </citation>
    <scope>NUCLEOTIDE SEQUENCE [LARGE SCALE GENOMIC DNA]</scope>
    <source>
        <strain>SC5314 / ATCC MYA-2876</strain>
    </source>
</reference>
<reference key="2">
    <citation type="journal article" date="2007" name="Genome Biol.">
        <title>Assembly of the Candida albicans genome into sixteen supercontigs aligned on the eight chromosomes.</title>
        <authorList>
            <person name="van het Hoog M."/>
            <person name="Rast T.J."/>
            <person name="Martchenko M."/>
            <person name="Grindle S."/>
            <person name="Dignard D."/>
            <person name="Hogues H."/>
            <person name="Cuomo C."/>
            <person name="Berriman M."/>
            <person name="Scherer S."/>
            <person name="Magee B.B."/>
            <person name="Whiteway M."/>
            <person name="Chibana H."/>
            <person name="Nantel A."/>
            <person name="Magee P.T."/>
        </authorList>
    </citation>
    <scope>GENOME REANNOTATION</scope>
    <source>
        <strain>SC5314 / ATCC MYA-2876</strain>
    </source>
</reference>
<reference key="3">
    <citation type="journal article" date="2013" name="Genome Biol.">
        <title>Assembly of a phased diploid Candida albicans genome facilitates allele-specific measurements and provides a simple model for repeat and indel structure.</title>
        <authorList>
            <person name="Muzzey D."/>
            <person name="Schwartz K."/>
            <person name="Weissman J.S."/>
            <person name="Sherlock G."/>
        </authorList>
    </citation>
    <scope>NUCLEOTIDE SEQUENCE [LARGE SCALE GENOMIC DNA]</scope>
    <scope>GENOME REANNOTATION</scope>
    <source>
        <strain>SC5314 / ATCC MYA-2876</strain>
    </source>
</reference>
<reference key="4">
    <citation type="journal article" date="2003" name="Yeast">
        <title>Genome-wide identification of fungal GPI proteins.</title>
        <authorList>
            <person name="De Groot P.W."/>
            <person name="Hellingwerf K.J."/>
            <person name="Klis F.M."/>
        </authorList>
    </citation>
    <scope>PREDICTION OF GPI-ANCHOR</scope>
</reference>
<reference key="5">
    <citation type="journal article" date="2005" name="J. Antimicrob. Chemother.">
        <title>Exposure of Candida albicans to antifungal agents affects expression of SAP2 and SAP9 secreted proteinase genes.</title>
        <authorList>
            <person name="Copping V.M.S."/>
            <person name="Barelle C.J."/>
            <person name="Hube B."/>
            <person name="Gow N.A.R."/>
            <person name="Brown A.J.P."/>
            <person name="Odds F.C."/>
        </authorList>
    </citation>
    <scope>INDUCTION</scope>
</reference>
<reference key="6">
    <citation type="journal article" date="2009" name="Proteomics">
        <title>Analysis of Candida albicans plasma membrane proteome.</title>
        <authorList>
            <person name="Cabezon V."/>
            <person name="Llama-Palacios A."/>
            <person name="Nombela C."/>
            <person name="Monteoliva L."/>
            <person name="Gil C."/>
        </authorList>
    </citation>
    <scope>IDENTIFICATION BY MASS SPECTROMETRY</scope>
    <scope>SUBCELLULAR LOCATION</scope>
</reference>
<reference key="7">
    <citation type="journal article" date="2011" name="J. Biol. Chem.">
        <title>Cap2-HAP complex is a critical transcriptional regulator that has dual but contrasting roles in regulation of iron homeostasis in Candida albicans.</title>
        <authorList>
            <person name="Singh R.P."/>
            <person name="Prasad H.K."/>
            <person name="Sinha I."/>
            <person name="Agarwal N."/>
            <person name="Natarajan K."/>
        </authorList>
    </citation>
    <scope>INDUCTION</scope>
</reference>
<name>PGA52_CANAL</name>
<protein>
    <recommendedName>
        <fullName evidence="1">Probable circularly permuted 1,3-beta-glucanase PGA52</fullName>
        <ecNumber evidence="1">3.2.1.39</ecNumber>
    </recommendedName>
</protein>
<keyword id="KW-1003">Cell membrane</keyword>
<keyword id="KW-0961">Cell wall biogenesis/degradation</keyword>
<keyword id="KW-0325">Glycoprotein</keyword>
<keyword id="KW-0326">Glycosidase</keyword>
<keyword id="KW-0336">GPI-anchor</keyword>
<keyword id="KW-0378">Hydrolase</keyword>
<keyword id="KW-0449">Lipoprotein</keyword>
<keyword id="KW-0472">Membrane</keyword>
<keyword id="KW-1185">Reference proteome</keyword>
<keyword id="KW-0732">Signal</keyword>
<proteinExistence type="evidence at protein level"/>